<protein>
    <recommendedName>
        <fullName>Carbamoyl phosphate synthase arginine-specific small chain</fullName>
        <shortName>CPS</shortName>
        <shortName>CPSase</shortName>
        <ecNumber evidence="1">6.3.5.5</ecNumber>
    </recommendedName>
    <alternativeName>
        <fullName>Arginine-specific carbamoyl phosphate synthetase, glutamine chain</fullName>
    </alternativeName>
    <alternativeName>
        <fullName>Glutamine-dependent carbamoyl phosphate synthetase</fullName>
    </alternativeName>
</protein>
<evidence type="ECO:0000250" key="1">
    <source>
        <dbReference type="UniProtKB" id="P22572"/>
    </source>
</evidence>
<evidence type="ECO:0000255" key="2"/>
<evidence type="ECO:0000255" key="3">
    <source>
        <dbReference type="PROSITE-ProRule" id="PRU00605"/>
    </source>
</evidence>
<evidence type="ECO:0000305" key="4"/>
<sequence>MFARVFKAMPARASALTSVNASIQARFMATVRQQRTAHERATFTIRDGPIFHGKSFGARTNISGEAVFTTSLVGYPESLTDPSYRGQILVFTQPLIGNYGVPSAERDQHGLLKYFESPNLQAAGVVVADVAEQYSHWTAVESLGEWCAREGVPAISGVDTRAIVTYLREQGSSLARITVGEEYDADQDEAFTDPEQIHLVRQVSTKAPFHVSAADPQCHVAVIDCGVKENILRSLVSRGASITVFPFDYPIHKVAHHFDGVFISNGPGDPTHCQETTYHLRRLMETSQVPIFGICLGHQLLALAAGARTIKLKYGNRAHNIPALDLSTGRCHITSQNHGYAVDASTLPSDWKPYFVNLNDSSNEGMIHKSRPIFSTQFHPEAKGGPLDSSYLFDIYIDSVKKYKASQAAFHPQRDSLPSPLLVDLLAKERVGVQPTIGMQNIAAAATAAAAAA</sequence>
<reference key="1">
    <citation type="journal article" date="2008" name="PLoS Genet.">
        <title>Genomic islands in the pathogenic filamentous fungus Aspergillus fumigatus.</title>
        <authorList>
            <person name="Fedorova N.D."/>
            <person name="Khaldi N."/>
            <person name="Joardar V.S."/>
            <person name="Maiti R."/>
            <person name="Amedeo P."/>
            <person name="Anderson M.J."/>
            <person name="Crabtree J."/>
            <person name="Silva J.C."/>
            <person name="Badger J.H."/>
            <person name="Albarraq A."/>
            <person name="Angiuoli S."/>
            <person name="Bussey H."/>
            <person name="Bowyer P."/>
            <person name="Cotty P.J."/>
            <person name="Dyer P.S."/>
            <person name="Egan A."/>
            <person name="Galens K."/>
            <person name="Fraser-Liggett C.M."/>
            <person name="Haas B.J."/>
            <person name="Inman J.M."/>
            <person name="Kent R."/>
            <person name="Lemieux S."/>
            <person name="Malavazi I."/>
            <person name="Orvis J."/>
            <person name="Roemer T."/>
            <person name="Ronning C.M."/>
            <person name="Sundaram J.P."/>
            <person name="Sutton G."/>
            <person name="Turner G."/>
            <person name="Venter J.C."/>
            <person name="White O.R."/>
            <person name="Whitty B.R."/>
            <person name="Youngman P."/>
            <person name="Wolfe K.H."/>
            <person name="Goldman G.H."/>
            <person name="Wortman J.R."/>
            <person name="Jiang B."/>
            <person name="Denning D.W."/>
            <person name="Nierman W.C."/>
        </authorList>
    </citation>
    <scope>NUCLEOTIDE SEQUENCE [LARGE SCALE GENOMIC DNA]</scope>
    <source>
        <strain>ATCC 1020 / DSM 3700 / CBS 544.65 / FGSC A1164 / JCM 1740 / NRRL 181 / WB 181</strain>
    </source>
</reference>
<keyword id="KW-0028">Amino-acid biosynthesis</keyword>
<keyword id="KW-0055">Arginine biosynthesis</keyword>
<keyword id="KW-0067">ATP-binding</keyword>
<keyword id="KW-0315">Glutamine amidotransferase</keyword>
<keyword id="KW-0436">Ligase</keyword>
<keyword id="KW-0496">Mitochondrion</keyword>
<keyword id="KW-0547">Nucleotide-binding</keyword>
<keyword id="KW-1185">Reference proteome</keyword>
<keyword id="KW-0809">Transit peptide</keyword>
<comment type="function">
    <text evidence="1">Small subunit of the arginine-specific carbamoyl phosphate synthase (CPSase). CPSase catalyzes the formation of carbamoyl phosphate from the ammonia moiety of glutamine, carbonate, and phosphate donated by ATP, the first step of the arginine biosynthetic pathway. The small subunit (glutamine amidotransferase) binds and cleaves glutamine to supply the large subunit with the substrate ammonia.</text>
</comment>
<comment type="catalytic activity">
    <reaction evidence="1">
        <text>hydrogencarbonate + L-glutamine + 2 ATP + H2O = carbamoyl phosphate + L-glutamate + 2 ADP + phosphate + 2 H(+)</text>
        <dbReference type="Rhea" id="RHEA:18633"/>
        <dbReference type="ChEBI" id="CHEBI:15377"/>
        <dbReference type="ChEBI" id="CHEBI:15378"/>
        <dbReference type="ChEBI" id="CHEBI:17544"/>
        <dbReference type="ChEBI" id="CHEBI:29985"/>
        <dbReference type="ChEBI" id="CHEBI:30616"/>
        <dbReference type="ChEBI" id="CHEBI:43474"/>
        <dbReference type="ChEBI" id="CHEBI:58228"/>
        <dbReference type="ChEBI" id="CHEBI:58359"/>
        <dbReference type="ChEBI" id="CHEBI:456216"/>
        <dbReference type="EC" id="6.3.5.5"/>
    </reaction>
</comment>
<comment type="catalytic activity">
    <molecule>Carbamoyl phosphate synthase arginine-specific small chain</molecule>
    <reaction evidence="1">
        <text>L-glutamine + H2O = L-glutamate + NH4(+)</text>
        <dbReference type="Rhea" id="RHEA:15889"/>
        <dbReference type="ChEBI" id="CHEBI:15377"/>
        <dbReference type="ChEBI" id="CHEBI:28938"/>
        <dbReference type="ChEBI" id="CHEBI:29985"/>
        <dbReference type="ChEBI" id="CHEBI:58359"/>
    </reaction>
</comment>
<comment type="pathway">
    <text evidence="1">Amino-acid biosynthesis; L-arginine biosynthesis; carbamoyl phosphate from bicarbonate: step 1/1.</text>
</comment>
<comment type="subunit">
    <text evidence="1">Heterodimer composed of 2 chains; the small (or glutamine) chain promotes the hydrolysis of glutamine to ammonia, which is used by the large (or ammonia) chain to synthesize carbamoyl phosphate.</text>
</comment>
<comment type="subcellular location">
    <subcellularLocation>
        <location evidence="1">Mitochondrion matrix</location>
    </subcellularLocation>
</comment>
<comment type="similarity">
    <text evidence="4">Belongs to the CarA family.</text>
</comment>
<name>CARA_NEOFI</name>
<feature type="transit peptide" description="Mitochondrion" evidence="2">
    <location>
        <begin position="1"/>
        <end position="28"/>
    </location>
</feature>
<feature type="chain" id="PRO_0000290597" description="Carbamoyl phosphate synthase arginine-specific small chain" evidence="2">
    <location>
        <begin position="29"/>
        <end position="453"/>
    </location>
</feature>
<feature type="domain" description="Glutamine amidotransferase type-1" evidence="3">
    <location>
        <begin position="219"/>
        <end position="406"/>
    </location>
</feature>
<feature type="active site" description="Nucleophile" evidence="3">
    <location>
        <position position="295"/>
    </location>
</feature>
<feature type="active site" evidence="3">
    <location>
        <position position="379"/>
    </location>
</feature>
<feature type="active site" evidence="3">
    <location>
        <position position="381"/>
    </location>
</feature>
<gene>
    <name type="primary">cpa1</name>
    <name type="ORF">NFIA_036340</name>
</gene>
<organism>
    <name type="scientific">Neosartorya fischeri (strain ATCC 1020 / DSM 3700 / CBS 544.65 / FGSC A1164 / JCM 1740 / NRRL 181 / WB 181)</name>
    <name type="common">Aspergillus fischerianus</name>
    <dbReference type="NCBI Taxonomy" id="331117"/>
    <lineage>
        <taxon>Eukaryota</taxon>
        <taxon>Fungi</taxon>
        <taxon>Dikarya</taxon>
        <taxon>Ascomycota</taxon>
        <taxon>Pezizomycotina</taxon>
        <taxon>Eurotiomycetes</taxon>
        <taxon>Eurotiomycetidae</taxon>
        <taxon>Eurotiales</taxon>
        <taxon>Aspergillaceae</taxon>
        <taxon>Aspergillus</taxon>
        <taxon>Aspergillus subgen. Fumigati</taxon>
    </lineage>
</organism>
<accession>A1CZ92</accession>
<proteinExistence type="inferred from homology"/>
<dbReference type="EC" id="6.3.5.5" evidence="1"/>
<dbReference type="EMBL" id="DS027686">
    <property type="protein sequence ID" value="EAW24062.1"/>
    <property type="molecule type" value="Genomic_DNA"/>
</dbReference>
<dbReference type="RefSeq" id="XP_001265959.1">
    <property type="nucleotide sequence ID" value="XM_001265958.1"/>
</dbReference>
<dbReference type="SMR" id="A1CZ92"/>
<dbReference type="STRING" id="331117.A1CZ92"/>
<dbReference type="EnsemblFungi" id="EAW24062">
    <property type="protein sequence ID" value="EAW24062"/>
    <property type="gene ID" value="NFIA_036340"/>
</dbReference>
<dbReference type="GeneID" id="4592759"/>
<dbReference type="KEGG" id="nfi:NFIA_036340"/>
<dbReference type="VEuPathDB" id="FungiDB:NFIA_036340"/>
<dbReference type="eggNOG" id="KOG0370">
    <property type="taxonomic scope" value="Eukaryota"/>
</dbReference>
<dbReference type="HOGENOM" id="CLU_035901_1_0_1"/>
<dbReference type="OMA" id="CFSVQYH"/>
<dbReference type="OrthoDB" id="434at2759"/>
<dbReference type="UniPathway" id="UPA00068">
    <property type="reaction ID" value="UER00171"/>
</dbReference>
<dbReference type="Proteomes" id="UP000006702">
    <property type="component" value="Unassembled WGS sequence"/>
</dbReference>
<dbReference type="GO" id="GO:0005951">
    <property type="term" value="C:carbamoyl-phosphate synthase complex"/>
    <property type="evidence" value="ECO:0007669"/>
    <property type="project" value="EnsemblFungi"/>
</dbReference>
<dbReference type="GO" id="GO:0005759">
    <property type="term" value="C:mitochondrial matrix"/>
    <property type="evidence" value="ECO:0007669"/>
    <property type="project" value="UniProtKB-SubCell"/>
</dbReference>
<dbReference type="GO" id="GO:0005524">
    <property type="term" value="F:ATP binding"/>
    <property type="evidence" value="ECO:0007669"/>
    <property type="project" value="UniProtKB-KW"/>
</dbReference>
<dbReference type="GO" id="GO:0004088">
    <property type="term" value="F:carbamoyl-phosphate synthase (glutamine-hydrolyzing) activity"/>
    <property type="evidence" value="ECO:0007669"/>
    <property type="project" value="UniProtKB-EC"/>
</dbReference>
<dbReference type="GO" id="GO:0004359">
    <property type="term" value="F:glutaminase activity"/>
    <property type="evidence" value="ECO:0007669"/>
    <property type="project" value="RHEA"/>
</dbReference>
<dbReference type="GO" id="GO:0006207">
    <property type="term" value="P:'de novo' pyrimidine nucleobase biosynthetic process"/>
    <property type="evidence" value="ECO:0007669"/>
    <property type="project" value="InterPro"/>
</dbReference>
<dbReference type="GO" id="GO:0006541">
    <property type="term" value="P:glutamine metabolic process"/>
    <property type="evidence" value="ECO:0007669"/>
    <property type="project" value="InterPro"/>
</dbReference>
<dbReference type="GO" id="GO:0006526">
    <property type="term" value="P:L-arginine biosynthetic process"/>
    <property type="evidence" value="ECO:0007669"/>
    <property type="project" value="UniProtKB-UniPathway"/>
</dbReference>
<dbReference type="GO" id="GO:0006221">
    <property type="term" value="P:pyrimidine nucleotide biosynthetic process"/>
    <property type="evidence" value="ECO:0007669"/>
    <property type="project" value="EnsemblFungi"/>
</dbReference>
<dbReference type="CDD" id="cd01744">
    <property type="entry name" value="GATase1_CPSase"/>
    <property type="match status" value="1"/>
</dbReference>
<dbReference type="FunFam" id="3.40.50.880:FF:000016">
    <property type="entry name" value="Carbamoyl-phosphate synthase arginine-specific small chain"/>
    <property type="match status" value="1"/>
</dbReference>
<dbReference type="FunFam" id="3.50.30.20:FF:000003">
    <property type="entry name" value="Carbamoyl-phosphate synthase arginine-specific small chain"/>
    <property type="match status" value="1"/>
</dbReference>
<dbReference type="Gene3D" id="3.40.50.880">
    <property type="match status" value="1"/>
</dbReference>
<dbReference type="Gene3D" id="3.50.30.20">
    <property type="entry name" value="Carbamoyl-phosphate synthase small subunit, N-terminal domain"/>
    <property type="match status" value="1"/>
</dbReference>
<dbReference type="HAMAP" id="MF_01209">
    <property type="entry name" value="CPSase_S_chain"/>
    <property type="match status" value="1"/>
</dbReference>
<dbReference type="InterPro" id="IPR006274">
    <property type="entry name" value="CarbamoylP_synth_ssu"/>
</dbReference>
<dbReference type="InterPro" id="IPR002474">
    <property type="entry name" value="CarbamoylP_synth_ssu_N"/>
</dbReference>
<dbReference type="InterPro" id="IPR036480">
    <property type="entry name" value="CarbP_synth_ssu_N_sf"/>
</dbReference>
<dbReference type="InterPro" id="IPR029062">
    <property type="entry name" value="Class_I_gatase-like"/>
</dbReference>
<dbReference type="InterPro" id="IPR035686">
    <property type="entry name" value="CPSase_GATase1"/>
</dbReference>
<dbReference type="InterPro" id="IPR017926">
    <property type="entry name" value="GATASE"/>
</dbReference>
<dbReference type="NCBIfam" id="TIGR01368">
    <property type="entry name" value="CPSaseIIsmall"/>
    <property type="match status" value="1"/>
</dbReference>
<dbReference type="NCBIfam" id="NF009475">
    <property type="entry name" value="PRK12838.1"/>
    <property type="match status" value="1"/>
</dbReference>
<dbReference type="PANTHER" id="PTHR11405:SF4">
    <property type="entry name" value="CARBAMOYL-PHOSPHATE SYNTHASE ARGININE-SPECIFIC SMALL CHAIN"/>
    <property type="match status" value="1"/>
</dbReference>
<dbReference type="PANTHER" id="PTHR11405">
    <property type="entry name" value="CARBAMOYLTRANSFERASE FAMILY MEMBER"/>
    <property type="match status" value="1"/>
</dbReference>
<dbReference type="Pfam" id="PF00988">
    <property type="entry name" value="CPSase_sm_chain"/>
    <property type="match status" value="1"/>
</dbReference>
<dbReference type="Pfam" id="PF00117">
    <property type="entry name" value="GATase"/>
    <property type="match status" value="1"/>
</dbReference>
<dbReference type="PRINTS" id="PR00097">
    <property type="entry name" value="ANTSNTHASEII"/>
</dbReference>
<dbReference type="PRINTS" id="PR00099">
    <property type="entry name" value="CPSGATASE"/>
</dbReference>
<dbReference type="PRINTS" id="PR00096">
    <property type="entry name" value="GATASE"/>
</dbReference>
<dbReference type="SMART" id="SM01097">
    <property type="entry name" value="CPSase_sm_chain"/>
    <property type="match status" value="1"/>
</dbReference>
<dbReference type="SUPFAM" id="SSF52021">
    <property type="entry name" value="Carbamoyl phosphate synthetase, small subunit N-terminal domain"/>
    <property type="match status" value="1"/>
</dbReference>
<dbReference type="SUPFAM" id="SSF52317">
    <property type="entry name" value="Class I glutamine amidotransferase-like"/>
    <property type="match status" value="1"/>
</dbReference>
<dbReference type="PROSITE" id="PS51273">
    <property type="entry name" value="GATASE_TYPE_1"/>
    <property type="match status" value="1"/>
</dbReference>